<evidence type="ECO:0000255" key="1">
    <source>
        <dbReference type="HAMAP-Rule" id="MF_00318"/>
    </source>
</evidence>
<gene>
    <name evidence="1" type="primary">eno</name>
    <name type="ordered locus">M1627_1358</name>
</gene>
<sequence length="419" mass="46651">MINRFSIEKVKGLEIIDSRGNPTIRVFVRTNDGVESFGDAPAGASKGTREAIEVRDENGLTVKRAVDIANYIIDPALHGIDVREQGIIDKILIDIDSTENKSKLGGNTIIATSIAALKTASKALGLEVFKYIAGPRLPKIPIPLLNIINGGLHAGNKLKIQEFIVLPIKFNTFKEAFFAAIEVYRNLKGLISERYGKIYTAVGDEGGFSPPLEETREALDLIYTSINNAGYQGKIYMGMDAAASDFYDPKKEKYIIDGKELNPNQLLEFYLDLAKEYPIVYLEDPFEENSFDMFGELQNKLNSTIVTGDDLYTTNIKYLKIGIEKRSTKGVIVKPNQVGTISETFEFTNLARRNSIKLVTSHRSGETEDNFIAEFAVGIESDFIKTGAPARGERTSKYNKLLEIENKFGLEYGGKYFYL</sequence>
<dbReference type="EC" id="4.2.1.11" evidence="1"/>
<dbReference type="EMBL" id="CP001401">
    <property type="protein sequence ID" value="ACP55241.1"/>
    <property type="molecule type" value="Genomic_DNA"/>
</dbReference>
<dbReference type="RefSeq" id="WP_012711313.1">
    <property type="nucleotide sequence ID" value="NC_012632.1"/>
</dbReference>
<dbReference type="SMR" id="C3N5G6"/>
<dbReference type="GeneID" id="84061620"/>
<dbReference type="KEGG" id="sim:M1627_1358"/>
<dbReference type="HOGENOM" id="CLU_031223_2_1_2"/>
<dbReference type="UniPathway" id="UPA00109">
    <property type="reaction ID" value="UER00187"/>
</dbReference>
<dbReference type="Proteomes" id="UP000002307">
    <property type="component" value="Chromosome"/>
</dbReference>
<dbReference type="GO" id="GO:0009986">
    <property type="term" value="C:cell surface"/>
    <property type="evidence" value="ECO:0007669"/>
    <property type="project" value="UniProtKB-SubCell"/>
</dbReference>
<dbReference type="GO" id="GO:0005576">
    <property type="term" value="C:extracellular region"/>
    <property type="evidence" value="ECO:0007669"/>
    <property type="project" value="UniProtKB-SubCell"/>
</dbReference>
<dbReference type="GO" id="GO:0000015">
    <property type="term" value="C:phosphopyruvate hydratase complex"/>
    <property type="evidence" value="ECO:0007669"/>
    <property type="project" value="InterPro"/>
</dbReference>
<dbReference type="GO" id="GO:0000287">
    <property type="term" value="F:magnesium ion binding"/>
    <property type="evidence" value="ECO:0007669"/>
    <property type="project" value="UniProtKB-UniRule"/>
</dbReference>
<dbReference type="GO" id="GO:0004634">
    <property type="term" value="F:phosphopyruvate hydratase activity"/>
    <property type="evidence" value="ECO:0007669"/>
    <property type="project" value="UniProtKB-UniRule"/>
</dbReference>
<dbReference type="GO" id="GO:0006096">
    <property type="term" value="P:glycolytic process"/>
    <property type="evidence" value="ECO:0007669"/>
    <property type="project" value="UniProtKB-UniRule"/>
</dbReference>
<dbReference type="CDD" id="cd03313">
    <property type="entry name" value="enolase"/>
    <property type="match status" value="1"/>
</dbReference>
<dbReference type="Gene3D" id="3.20.20.120">
    <property type="entry name" value="Enolase-like C-terminal domain"/>
    <property type="match status" value="1"/>
</dbReference>
<dbReference type="Gene3D" id="3.30.390.10">
    <property type="entry name" value="Enolase-like, N-terminal domain"/>
    <property type="match status" value="1"/>
</dbReference>
<dbReference type="HAMAP" id="MF_00318">
    <property type="entry name" value="Enolase"/>
    <property type="match status" value="1"/>
</dbReference>
<dbReference type="InterPro" id="IPR000941">
    <property type="entry name" value="Enolase"/>
</dbReference>
<dbReference type="InterPro" id="IPR036849">
    <property type="entry name" value="Enolase-like_C_sf"/>
</dbReference>
<dbReference type="InterPro" id="IPR029017">
    <property type="entry name" value="Enolase-like_N"/>
</dbReference>
<dbReference type="InterPro" id="IPR020810">
    <property type="entry name" value="Enolase_C"/>
</dbReference>
<dbReference type="InterPro" id="IPR020809">
    <property type="entry name" value="Enolase_CS"/>
</dbReference>
<dbReference type="InterPro" id="IPR020811">
    <property type="entry name" value="Enolase_N"/>
</dbReference>
<dbReference type="NCBIfam" id="TIGR01060">
    <property type="entry name" value="eno"/>
    <property type="match status" value="1"/>
</dbReference>
<dbReference type="PANTHER" id="PTHR11902">
    <property type="entry name" value="ENOLASE"/>
    <property type="match status" value="1"/>
</dbReference>
<dbReference type="PANTHER" id="PTHR11902:SF1">
    <property type="entry name" value="ENOLASE"/>
    <property type="match status" value="1"/>
</dbReference>
<dbReference type="Pfam" id="PF00113">
    <property type="entry name" value="Enolase_C"/>
    <property type="match status" value="1"/>
</dbReference>
<dbReference type="Pfam" id="PF03952">
    <property type="entry name" value="Enolase_N"/>
    <property type="match status" value="1"/>
</dbReference>
<dbReference type="PIRSF" id="PIRSF001400">
    <property type="entry name" value="Enolase"/>
    <property type="match status" value="1"/>
</dbReference>
<dbReference type="PRINTS" id="PR00148">
    <property type="entry name" value="ENOLASE"/>
</dbReference>
<dbReference type="SFLD" id="SFLDF00002">
    <property type="entry name" value="enolase"/>
    <property type="match status" value="1"/>
</dbReference>
<dbReference type="SFLD" id="SFLDG00178">
    <property type="entry name" value="enolase"/>
    <property type="match status" value="1"/>
</dbReference>
<dbReference type="SMART" id="SM01192">
    <property type="entry name" value="Enolase_C"/>
    <property type="match status" value="1"/>
</dbReference>
<dbReference type="SMART" id="SM01193">
    <property type="entry name" value="Enolase_N"/>
    <property type="match status" value="1"/>
</dbReference>
<dbReference type="SUPFAM" id="SSF51604">
    <property type="entry name" value="Enolase C-terminal domain-like"/>
    <property type="match status" value="1"/>
</dbReference>
<dbReference type="SUPFAM" id="SSF54826">
    <property type="entry name" value="Enolase N-terminal domain-like"/>
    <property type="match status" value="1"/>
</dbReference>
<dbReference type="PROSITE" id="PS00164">
    <property type="entry name" value="ENOLASE"/>
    <property type="match status" value="1"/>
</dbReference>
<comment type="function">
    <text evidence="1">Catalyzes the reversible conversion of 2-phosphoglycerate (2-PG) into phosphoenolpyruvate (PEP). It is essential for the degradation of carbohydrates via glycolysis.</text>
</comment>
<comment type="catalytic activity">
    <reaction evidence="1">
        <text>(2R)-2-phosphoglycerate = phosphoenolpyruvate + H2O</text>
        <dbReference type="Rhea" id="RHEA:10164"/>
        <dbReference type="ChEBI" id="CHEBI:15377"/>
        <dbReference type="ChEBI" id="CHEBI:58289"/>
        <dbReference type="ChEBI" id="CHEBI:58702"/>
        <dbReference type="EC" id="4.2.1.11"/>
    </reaction>
</comment>
<comment type="cofactor">
    <cofactor evidence="1">
        <name>Mg(2+)</name>
        <dbReference type="ChEBI" id="CHEBI:18420"/>
    </cofactor>
    <text evidence="1">Binds a second Mg(2+) ion via substrate during catalysis.</text>
</comment>
<comment type="pathway">
    <text evidence="1">Carbohydrate degradation; glycolysis; pyruvate from D-glyceraldehyde 3-phosphate: step 4/5.</text>
</comment>
<comment type="subcellular location">
    <subcellularLocation>
        <location evidence="1">Cytoplasm</location>
    </subcellularLocation>
    <subcellularLocation>
        <location evidence="1">Secreted</location>
    </subcellularLocation>
    <subcellularLocation>
        <location evidence="1">Cell surface</location>
    </subcellularLocation>
    <text evidence="1">Fractions of enolase are present in both the cytoplasm and on the cell surface.</text>
</comment>
<comment type="similarity">
    <text evidence="1">Belongs to the enolase family.</text>
</comment>
<accession>C3N5G6</accession>
<organism>
    <name type="scientific">Saccharolobus islandicus (strain M.16.27)</name>
    <name type="common">Sulfolobus islandicus</name>
    <dbReference type="NCBI Taxonomy" id="427318"/>
    <lineage>
        <taxon>Archaea</taxon>
        <taxon>Thermoproteota</taxon>
        <taxon>Thermoprotei</taxon>
        <taxon>Sulfolobales</taxon>
        <taxon>Sulfolobaceae</taxon>
        <taxon>Saccharolobus</taxon>
    </lineage>
</organism>
<proteinExistence type="inferred from homology"/>
<feature type="chain" id="PRO_1000205104" description="Enolase">
    <location>
        <begin position="1"/>
        <end position="419"/>
    </location>
</feature>
<feature type="active site" description="Proton donor" evidence="1">
    <location>
        <position position="205"/>
    </location>
</feature>
<feature type="active site" description="Proton acceptor" evidence="1">
    <location>
        <position position="334"/>
    </location>
</feature>
<feature type="binding site" evidence="1">
    <location>
        <position position="161"/>
    </location>
    <ligand>
        <name>(2R)-2-phosphoglycerate</name>
        <dbReference type="ChEBI" id="CHEBI:58289"/>
    </ligand>
</feature>
<feature type="binding site" evidence="1">
    <location>
        <position position="240"/>
    </location>
    <ligand>
        <name>Mg(2+)</name>
        <dbReference type="ChEBI" id="CHEBI:18420"/>
    </ligand>
</feature>
<feature type="binding site" evidence="1">
    <location>
        <position position="283"/>
    </location>
    <ligand>
        <name>Mg(2+)</name>
        <dbReference type="ChEBI" id="CHEBI:18420"/>
    </ligand>
</feature>
<feature type="binding site" evidence="1">
    <location>
        <position position="309"/>
    </location>
    <ligand>
        <name>Mg(2+)</name>
        <dbReference type="ChEBI" id="CHEBI:18420"/>
    </ligand>
</feature>
<feature type="binding site" evidence="1">
    <location>
        <position position="334"/>
    </location>
    <ligand>
        <name>(2R)-2-phosphoglycerate</name>
        <dbReference type="ChEBI" id="CHEBI:58289"/>
    </ligand>
</feature>
<feature type="binding site" evidence="1">
    <location>
        <position position="363"/>
    </location>
    <ligand>
        <name>(2R)-2-phosphoglycerate</name>
        <dbReference type="ChEBI" id="CHEBI:58289"/>
    </ligand>
</feature>
<feature type="binding site" evidence="1">
    <location>
        <position position="364"/>
    </location>
    <ligand>
        <name>(2R)-2-phosphoglycerate</name>
        <dbReference type="ChEBI" id="CHEBI:58289"/>
    </ligand>
</feature>
<feature type="binding site" evidence="1">
    <location>
        <position position="385"/>
    </location>
    <ligand>
        <name>(2R)-2-phosphoglycerate</name>
        <dbReference type="ChEBI" id="CHEBI:58289"/>
    </ligand>
</feature>
<keyword id="KW-0963">Cytoplasm</keyword>
<keyword id="KW-0324">Glycolysis</keyword>
<keyword id="KW-0456">Lyase</keyword>
<keyword id="KW-0460">Magnesium</keyword>
<keyword id="KW-0479">Metal-binding</keyword>
<keyword id="KW-0964">Secreted</keyword>
<name>ENO_SACI3</name>
<reference key="1">
    <citation type="journal article" date="2009" name="Proc. Natl. Acad. Sci. U.S.A.">
        <title>Biogeography of the Sulfolobus islandicus pan-genome.</title>
        <authorList>
            <person name="Reno M.L."/>
            <person name="Held N.L."/>
            <person name="Fields C.J."/>
            <person name="Burke P.V."/>
            <person name="Whitaker R.J."/>
        </authorList>
    </citation>
    <scope>NUCLEOTIDE SEQUENCE [LARGE SCALE GENOMIC DNA]</scope>
    <source>
        <strain>M.16.27</strain>
    </source>
</reference>
<protein>
    <recommendedName>
        <fullName evidence="1">Enolase</fullName>
        <ecNumber evidence="1">4.2.1.11</ecNumber>
    </recommendedName>
    <alternativeName>
        <fullName evidence="1">2-phospho-D-glycerate hydro-lyase</fullName>
    </alternativeName>
    <alternativeName>
        <fullName evidence="1">2-phosphoglycerate dehydratase</fullName>
    </alternativeName>
</protein>